<gene>
    <name evidence="1" type="primary">panC</name>
    <name type="ordered locus">BCB4264_A1596</name>
</gene>
<organism>
    <name type="scientific">Bacillus cereus (strain B4264)</name>
    <dbReference type="NCBI Taxonomy" id="405532"/>
    <lineage>
        <taxon>Bacteria</taxon>
        <taxon>Bacillati</taxon>
        <taxon>Bacillota</taxon>
        <taxon>Bacilli</taxon>
        <taxon>Bacillales</taxon>
        <taxon>Bacillaceae</taxon>
        <taxon>Bacillus</taxon>
        <taxon>Bacillus cereus group</taxon>
    </lineage>
</organism>
<sequence>MKIVTTVQEMQQITSELRASGKSIGFVPTMGYLHEGHATLLRKAREENEIVVLSVFVNPLQFGPNEDLDRYPRDIDRDENVAKENGVDYLFYPSVEEMYPAEQTTTVEVVKRTDVLCGQQRPGHFAGVATVLMKLFNITVPTRAYFGMKDAQQVAVIEGFVTDFNIPVTIVPVDIVREEDGLAKSSRNVYLSQDEREEALHLYRSLCIAKERIEAGERNPEIITNLVKDYIETHTKGTVDYADLYAYPSLTMVEKVEGRIILAIAVKFENVRLIDNITLTVK</sequence>
<feature type="chain" id="PRO_1000118142" description="Pantothenate synthetase">
    <location>
        <begin position="1"/>
        <end position="282"/>
    </location>
</feature>
<feature type="active site" description="Proton donor" evidence="1">
    <location>
        <position position="37"/>
    </location>
</feature>
<feature type="binding site" evidence="1">
    <location>
        <begin position="30"/>
        <end position="37"/>
    </location>
    <ligand>
        <name>ATP</name>
        <dbReference type="ChEBI" id="CHEBI:30616"/>
    </ligand>
</feature>
<feature type="binding site" evidence="1">
    <location>
        <position position="61"/>
    </location>
    <ligand>
        <name>(R)-pantoate</name>
        <dbReference type="ChEBI" id="CHEBI:15980"/>
    </ligand>
</feature>
<feature type="binding site" evidence="1">
    <location>
        <position position="61"/>
    </location>
    <ligand>
        <name>beta-alanine</name>
        <dbReference type="ChEBI" id="CHEBI:57966"/>
    </ligand>
</feature>
<feature type="binding site" evidence="1">
    <location>
        <begin position="147"/>
        <end position="150"/>
    </location>
    <ligand>
        <name>ATP</name>
        <dbReference type="ChEBI" id="CHEBI:30616"/>
    </ligand>
</feature>
<feature type="binding site" evidence="1">
    <location>
        <position position="153"/>
    </location>
    <ligand>
        <name>(R)-pantoate</name>
        <dbReference type="ChEBI" id="CHEBI:15980"/>
    </ligand>
</feature>
<feature type="binding site" evidence="1">
    <location>
        <position position="176"/>
    </location>
    <ligand>
        <name>ATP</name>
        <dbReference type="ChEBI" id="CHEBI:30616"/>
    </ligand>
</feature>
<feature type="binding site" evidence="1">
    <location>
        <begin position="184"/>
        <end position="187"/>
    </location>
    <ligand>
        <name>ATP</name>
        <dbReference type="ChEBI" id="CHEBI:30616"/>
    </ligand>
</feature>
<proteinExistence type="inferred from homology"/>
<reference key="1">
    <citation type="submission" date="2008-10" db="EMBL/GenBank/DDBJ databases">
        <title>Genome sequence of Bacillus cereus B4264.</title>
        <authorList>
            <person name="Dodson R.J."/>
            <person name="Durkin A.S."/>
            <person name="Rosovitz M.J."/>
            <person name="Rasko D.A."/>
            <person name="Hoffmaster A."/>
            <person name="Ravel J."/>
            <person name="Sutton G."/>
        </authorList>
    </citation>
    <scope>NUCLEOTIDE SEQUENCE [LARGE SCALE GENOMIC DNA]</scope>
    <source>
        <strain>B4264</strain>
    </source>
</reference>
<name>PANC_BACC4</name>
<protein>
    <recommendedName>
        <fullName evidence="1">Pantothenate synthetase</fullName>
        <shortName evidence="1">PS</shortName>
        <ecNumber evidence="1">6.3.2.1</ecNumber>
    </recommendedName>
    <alternativeName>
        <fullName evidence="1">Pantoate--beta-alanine ligase</fullName>
    </alternativeName>
    <alternativeName>
        <fullName evidence="1">Pantoate-activating enzyme</fullName>
    </alternativeName>
</protein>
<dbReference type="EC" id="6.3.2.1" evidence="1"/>
<dbReference type="EMBL" id="CP001176">
    <property type="protein sequence ID" value="ACK64054.1"/>
    <property type="molecule type" value="Genomic_DNA"/>
</dbReference>
<dbReference type="RefSeq" id="WP_000707025.1">
    <property type="nucleotide sequence ID" value="NZ_VEHB01000003.1"/>
</dbReference>
<dbReference type="SMR" id="B7HHU4"/>
<dbReference type="KEGG" id="bcb:BCB4264_A1596"/>
<dbReference type="HOGENOM" id="CLU_047148_0_0_9"/>
<dbReference type="UniPathway" id="UPA00028">
    <property type="reaction ID" value="UER00005"/>
</dbReference>
<dbReference type="Proteomes" id="UP000007096">
    <property type="component" value="Chromosome"/>
</dbReference>
<dbReference type="GO" id="GO:0005829">
    <property type="term" value="C:cytosol"/>
    <property type="evidence" value="ECO:0007669"/>
    <property type="project" value="TreeGrafter"/>
</dbReference>
<dbReference type="GO" id="GO:0005524">
    <property type="term" value="F:ATP binding"/>
    <property type="evidence" value="ECO:0007669"/>
    <property type="project" value="UniProtKB-KW"/>
</dbReference>
<dbReference type="GO" id="GO:0004592">
    <property type="term" value="F:pantoate-beta-alanine ligase activity"/>
    <property type="evidence" value="ECO:0007669"/>
    <property type="project" value="UniProtKB-UniRule"/>
</dbReference>
<dbReference type="GO" id="GO:0015940">
    <property type="term" value="P:pantothenate biosynthetic process"/>
    <property type="evidence" value="ECO:0007669"/>
    <property type="project" value="UniProtKB-UniRule"/>
</dbReference>
<dbReference type="CDD" id="cd00560">
    <property type="entry name" value="PanC"/>
    <property type="match status" value="1"/>
</dbReference>
<dbReference type="FunFam" id="3.30.1300.10:FF:000001">
    <property type="entry name" value="Pantothenate synthetase"/>
    <property type="match status" value="1"/>
</dbReference>
<dbReference type="FunFam" id="3.40.50.620:FF:000013">
    <property type="entry name" value="Pantothenate synthetase"/>
    <property type="match status" value="1"/>
</dbReference>
<dbReference type="Gene3D" id="3.40.50.620">
    <property type="entry name" value="HUPs"/>
    <property type="match status" value="1"/>
</dbReference>
<dbReference type="Gene3D" id="3.30.1300.10">
    <property type="entry name" value="Pantoate-beta-alanine ligase, C-terminal domain"/>
    <property type="match status" value="1"/>
</dbReference>
<dbReference type="HAMAP" id="MF_00158">
    <property type="entry name" value="PanC"/>
    <property type="match status" value="1"/>
</dbReference>
<dbReference type="InterPro" id="IPR004821">
    <property type="entry name" value="Cyt_trans-like"/>
</dbReference>
<dbReference type="InterPro" id="IPR003721">
    <property type="entry name" value="Pantoate_ligase"/>
</dbReference>
<dbReference type="InterPro" id="IPR042176">
    <property type="entry name" value="Pantoate_ligase_C"/>
</dbReference>
<dbReference type="InterPro" id="IPR014729">
    <property type="entry name" value="Rossmann-like_a/b/a_fold"/>
</dbReference>
<dbReference type="NCBIfam" id="TIGR00125">
    <property type="entry name" value="cyt_tran_rel"/>
    <property type="match status" value="1"/>
</dbReference>
<dbReference type="NCBIfam" id="TIGR00018">
    <property type="entry name" value="panC"/>
    <property type="match status" value="1"/>
</dbReference>
<dbReference type="PANTHER" id="PTHR21299">
    <property type="entry name" value="CYTIDYLATE KINASE/PANTOATE-BETA-ALANINE LIGASE"/>
    <property type="match status" value="1"/>
</dbReference>
<dbReference type="PANTHER" id="PTHR21299:SF1">
    <property type="entry name" value="PANTOATE--BETA-ALANINE LIGASE"/>
    <property type="match status" value="1"/>
</dbReference>
<dbReference type="Pfam" id="PF02569">
    <property type="entry name" value="Pantoate_ligase"/>
    <property type="match status" value="1"/>
</dbReference>
<dbReference type="SUPFAM" id="SSF52374">
    <property type="entry name" value="Nucleotidylyl transferase"/>
    <property type="match status" value="1"/>
</dbReference>
<evidence type="ECO:0000255" key="1">
    <source>
        <dbReference type="HAMAP-Rule" id="MF_00158"/>
    </source>
</evidence>
<keyword id="KW-0067">ATP-binding</keyword>
<keyword id="KW-0963">Cytoplasm</keyword>
<keyword id="KW-0436">Ligase</keyword>
<keyword id="KW-0547">Nucleotide-binding</keyword>
<keyword id="KW-0566">Pantothenate biosynthesis</keyword>
<accession>B7HHU4</accession>
<comment type="function">
    <text evidence="1">Catalyzes the condensation of pantoate with beta-alanine in an ATP-dependent reaction via a pantoyl-adenylate intermediate.</text>
</comment>
<comment type="catalytic activity">
    <reaction evidence="1">
        <text>(R)-pantoate + beta-alanine + ATP = (R)-pantothenate + AMP + diphosphate + H(+)</text>
        <dbReference type="Rhea" id="RHEA:10912"/>
        <dbReference type="ChEBI" id="CHEBI:15378"/>
        <dbReference type="ChEBI" id="CHEBI:15980"/>
        <dbReference type="ChEBI" id="CHEBI:29032"/>
        <dbReference type="ChEBI" id="CHEBI:30616"/>
        <dbReference type="ChEBI" id="CHEBI:33019"/>
        <dbReference type="ChEBI" id="CHEBI:57966"/>
        <dbReference type="ChEBI" id="CHEBI:456215"/>
        <dbReference type="EC" id="6.3.2.1"/>
    </reaction>
</comment>
<comment type="pathway">
    <text evidence="1">Cofactor biosynthesis; (R)-pantothenate biosynthesis; (R)-pantothenate from (R)-pantoate and beta-alanine: step 1/1.</text>
</comment>
<comment type="subunit">
    <text evidence="1">Homodimer.</text>
</comment>
<comment type="subcellular location">
    <subcellularLocation>
        <location evidence="1">Cytoplasm</location>
    </subcellularLocation>
</comment>
<comment type="miscellaneous">
    <text evidence="1">The reaction proceeds by a bi uni uni bi ping pong mechanism.</text>
</comment>
<comment type="similarity">
    <text evidence="1">Belongs to the pantothenate synthetase family.</text>
</comment>